<protein>
    <recommendedName>
        <fullName evidence="9">Glycine betaine/proline betaine transport system permease protein ProW</fullName>
    </recommendedName>
</protein>
<reference key="1">
    <citation type="journal article" date="1989" name="J. Bacteriol.">
        <title>Nucleotide sequence of the osmoregulatory proU operon of Escherichia coli.</title>
        <authorList>
            <person name="Gowrishankar J."/>
        </authorList>
    </citation>
    <scope>NUCLEOTIDE SEQUENCE [GENOMIC DNA]</scope>
</reference>
<reference key="2">
    <citation type="journal article" date="1990" name="J. Bacteriol.">
        <authorList>
            <person name="Gowrishankar J."/>
        </authorList>
    </citation>
    <scope>ERRATUM OF PUBMED:2649479</scope>
</reference>
<reference key="3">
    <citation type="journal article" date="1997" name="DNA Res.">
        <title>Construction of a contiguous 874-kb sequence of the Escherichia coli-K12 genome corresponding to 50.0-68.8 min on the linkage map and analysis of its sequence features.</title>
        <authorList>
            <person name="Yamamoto Y."/>
            <person name="Aiba H."/>
            <person name="Baba T."/>
            <person name="Hayashi K."/>
            <person name="Inada T."/>
            <person name="Isono K."/>
            <person name="Itoh T."/>
            <person name="Kimura S."/>
            <person name="Kitagawa M."/>
            <person name="Makino K."/>
            <person name="Miki T."/>
            <person name="Mitsuhashi N."/>
            <person name="Mizobuchi K."/>
            <person name="Mori H."/>
            <person name="Nakade S."/>
            <person name="Nakamura Y."/>
            <person name="Nashimoto H."/>
            <person name="Oshima T."/>
            <person name="Oyama S."/>
            <person name="Saito N."/>
            <person name="Sampei G."/>
            <person name="Satoh Y."/>
            <person name="Sivasundaram S."/>
            <person name="Tagami H."/>
            <person name="Takahashi H."/>
            <person name="Takeda J."/>
            <person name="Takemoto K."/>
            <person name="Uehara K."/>
            <person name="Wada C."/>
            <person name="Yamagata S."/>
            <person name="Horiuchi T."/>
        </authorList>
    </citation>
    <scope>NUCLEOTIDE SEQUENCE [LARGE SCALE GENOMIC DNA]</scope>
    <source>
        <strain>K12 / W3110 / ATCC 27325 / DSM 5911</strain>
    </source>
</reference>
<reference key="4">
    <citation type="journal article" date="1997" name="Science">
        <title>The complete genome sequence of Escherichia coli K-12.</title>
        <authorList>
            <person name="Blattner F.R."/>
            <person name="Plunkett G. III"/>
            <person name="Bloch C.A."/>
            <person name="Perna N.T."/>
            <person name="Burland V."/>
            <person name="Riley M."/>
            <person name="Collado-Vides J."/>
            <person name="Glasner J.D."/>
            <person name="Rode C.K."/>
            <person name="Mayhew G.F."/>
            <person name="Gregor J."/>
            <person name="Davis N.W."/>
            <person name="Kirkpatrick H.A."/>
            <person name="Goeden M.A."/>
            <person name="Rose D.J."/>
            <person name="Mau B."/>
            <person name="Shao Y."/>
        </authorList>
    </citation>
    <scope>NUCLEOTIDE SEQUENCE [LARGE SCALE GENOMIC DNA]</scope>
    <source>
        <strain>K12 / MG1655 / ATCC 47076</strain>
    </source>
</reference>
<reference key="5">
    <citation type="journal article" date="2006" name="Mol. Syst. Biol.">
        <title>Highly accurate genome sequences of Escherichia coli K-12 strains MG1655 and W3110.</title>
        <authorList>
            <person name="Hayashi K."/>
            <person name="Morooka N."/>
            <person name="Yamamoto Y."/>
            <person name="Fujita K."/>
            <person name="Isono K."/>
            <person name="Choi S."/>
            <person name="Ohtsubo E."/>
            <person name="Baba T."/>
            <person name="Wanner B.L."/>
            <person name="Mori H."/>
            <person name="Horiuchi T."/>
        </authorList>
    </citation>
    <scope>NUCLEOTIDE SEQUENCE [LARGE SCALE GENOMIC DNA]</scope>
    <source>
        <strain>K12 / W3110 / ATCC 27325 / DSM 5911</strain>
    </source>
</reference>
<reference key="6">
    <citation type="journal article" date="1987" name="J. Biol. Chem.">
        <title>Purification and characterization of a glycine betaine binding protein from Escherichia coli.</title>
        <authorList>
            <person name="Barron A."/>
            <person name="Jung J.U."/>
            <person name="Villarejo W."/>
        </authorList>
    </citation>
    <scope>FUNCTION IN GLYCINE BETAINE TRANSPORT</scope>
</reference>
<reference key="7">
    <citation type="journal article" date="1995" name="Mol. Gen. Genet.">
        <title>The osmoprotectant proline betaine is a major substrate for the binding-protein-dependent transport system ProU of Escherichia coli K-12.</title>
        <authorList>
            <person name="Haardt M."/>
            <person name="Kempf B."/>
            <person name="Faatz E."/>
            <person name="Bremer E."/>
        </authorList>
    </citation>
    <scope>FUNCTION IN PROLINE BETAINE TRANSPORT</scope>
</reference>
<reference key="8">
    <citation type="journal article" date="2005" name="Science">
        <title>Global topology analysis of the Escherichia coli inner membrane proteome.</title>
        <authorList>
            <person name="Daley D.O."/>
            <person name="Rapp M."/>
            <person name="Granseth E."/>
            <person name="Melen K."/>
            <person name="Drew D."/>
            <person name="von Heijne G."/>
        </authorList>
    </citation>
    <scope>TOPOLOGY [LARGE SCALE ANALYSIS]</scope>
    <scope>SUBCELLULAR LOCATION</scope>
    <source>
        <strain>K12 / MG1655 / ATCC 47076</strain>
    </source>
</reference>
<reference key="9">
    <citation type="journal article" date="2013" name="Mol. Membr. Biol.">
        <title>Functional reconstitution and osmoregulatory properties of the ProU ABC transporter from Escherichia coli.</title>
        <authorList>
            <person name="Gul N."/>
            <person name="Poolman B."/>
        </authorList>
    </citation>
    <scope>FUNCTION IN GLYCINE BETAINE TRANSPORT</scope>
    <scope>SUBUNIT</scope>
    <source>
        <strain>K12</strain>
    </source>
</reference>
<comment type="function">
    <text evidence="5 6 7 9">Part of the ProU ABC transporter complex involved in glycine betaine and proline betaine uptake (PubMed:23249124, PubMed:3305496, PubMed:7898450). Probably responsible for the translocation of the substrate across the membrane (Probable).</text>
</comment>
<comment type="subunit">
    <text evidence="5">The complex is composed of two ATP-binding proteins (ProV), two transmembrane proteins (ProW) and a solute-binding protein (ProX).</text>
</comment>
<comment type="interaction">
    <interactant intactId="EBI-8794761">
        <id>P14176</id>
    </interactant>
    <interactant intactId="EBI-546797">
        <id>P14175</id>
        <label>proV</label>
    </interactant>
    <organismsDiffer>false</organismsDiffer>
    <experiments>2</experiments>
</comment>
<comment type="subcellular location">
    <subcellularLocation>
        <location evidence="4">Cell inner membrane</location>
        <topology evidence="1">Multi-pass membrane protein</topology>
    </subcellularLocation>
</comment>
<comment type="similarity">
    <text evidence="9">Belongs to the binding-protein-dependent transport system permease family. CysTW subfamily.</text>
</comment>
<sequence length="354" mass="37620">MADQNNPWDTTPAADSAAQSADAWGTPTTAPTDGGGADWLTSTPAPNVEHFNILDPFHKTLIPLDSWVTEGIDWVVTHFRPVFQGVRVPVDYILNGFQQLLLGMPAPVAIIVFALIAWQISGVGMGVATLVSLIAIGAIGAWSQAMVTLALVLTALLFCIVIGLPLGIWLARSPRAAKIIRPLLDAMQTTPAFVYLVPIVMLFGIGNVPGVVVTIIFALPPIIRLTILGINQVPADLIEASRSFGASPRQMLFKVQLPLAMPTIMAGVNQTLMLALSMVVIASMIAVGGLGQMVLRGIGRLDMGLATVGGVGIVILAIILDRLTQAVGRDSRSRGNRRWYTTGPVGLLTRPFIK</sequence>
<name>PROW_ECOLI</name>
<feature type="chain" id="PRO_0000060191" description="Glycine betaine/proline betaine transport system permease protein ProW">
    <location>
        <begin position="1"/>
        <end position="354"/>
    </location>
</feature>
<feature type="topological domain" description="Cytoplasmic" evidence="10">
    <location>
        <begin position="1"/>
        <end position="99"/>
    </location>
</feature>
<feature type="transmembrane region" description="Helical" evidence="1">
    <location>
        <begin position="100"/>
        <end position="120"/>
    </location>
</feature>
<feature type="topological domain" description="Periplasmic" evidence="10">
    <location>
        <position position="121"/>
    </location>
</feature>
<feature type="transmembrane region" description="Helical" evidence="1">
    <location>
        <begin position="122"/>
        <end position="142"/>
    </location>
</feature>
<feature type="topological domain" description="Cytoplasmic" evidence="10">
    <location>
        <begin position="143"/>
        <end position="148"/>
    </location>
</feature>
<feature type="transmembrane region" description="Helical" evidence="1">
    <location>
        <begin position="149"/>
        <end position="169"/>
    </location>
</feature>
<feature type="topological domain" description="Periplasmic" evidence="10">
    <location>
        <begin position="170"/>
        <end position="198"/>
    </location>
</feature>
<feature type="transmembrane region" description="Helical" evidence="1">
    <location>
        <begin position="199"/>
        <end position="219"/>
    </location>
</feature>
<feature type="topological domain" description="Cytoplasmic" evidence="10">
    <location>
        <begin position="220"/>
        <end position="270"/>
    </location>
</feature>
<feature type="transmembrane region" description="Helical" evidence="1">
    <location>
        <begin position="271"/>
        <end position="291"/>
    </location>
</feature>
<feature type="topological domain" description="Periplasmic" evidence="10">
    <location>
        <begin position="292"/>
        <end position="300"/>
    </location>
</feature>
<feature type="transmembrane region" description="Helical" evidence="1">
    <location>
        <begin position="301"/>
        <end position="321"/>
    </location>
</feature>
<feature type="topological domain" description="Cytoplasmic" evidence="4">
    <location>
        <begin position="322"/>
        <end position="354"/>
    </location>
</feature>
<feature type="domain" description="ABC transmembrane type-1" evidence="2">
    <location>
        <begin position="145"/>
        <end position="324"/>
    </location>
</feature>
<feature type="region of interest" description="Disordered" evidence="3">
    <location>
        <begin position="1"/>
        <end position="41"/>
    </location>
</feature>
<feature type="compositionally biased region" description="Low complexity" evidence="3">
    <location>
        <begin position="13"/>
        <end position="32"/>
    </location>
</feature>
<organism>
    <name type="scientific">Escherichia coli (strain K12)</name>
    <dbReference type="NCBI Taxonomy" id="83333"/>
    <lineage>
        <taxon>Bacteria</taxon>
        <taxon>Pseudomonadati</taxon>
        <taxon>Pseudomonadota</taxon>
        <taxon>Gammaproteobacteria</taxon>
        <taxon>Enterobacterales</taxon>
        <taxon>Enterobacteriaceae</taxon>
        <taxon>Escherichia</taxon>
    </lineage>
</organism>
<dbReference type="EMBL" id="M24856">
    <property type="protein sequence ID" value="AAA24428.1"/>
    <property type="molecule type" value="Genomic_DNA"/>
</dbReference>
<dbReference type="EMBL" id="U00096">
    <property type="protein sequence ID" value="AAC75725.1"/>
    <property type="molecule type" value="Genomic_DNA"/>
</dbReference>
<dbReference type="EMBL" id="AP009048">
    <property type="protein sequence ID" value="BAA16543.1"/>
    <property type="molecule type" value="Genomic_DNA"/>
</dbReference>
<dbReference type="PIR" id="JS0129">
    <property type="entry name" value="MMECPW"/>
</dbReference>
<dbReference type="RefSeq" id="NP_417164.1">
    <property type="nucleotide sequence ID" value="NC_000913.3"/>
</dbReference>
<dbReference type="RefSeq" id="WP_000774988.1">
    <property type="nucleotide sequence ID" value="NZ_LN832404.1"/>
</dbReference>
<dbReference type="SMR" id="P14176"/>
<dbReference type="BioGRID" id="4259449">
    <property type="interactions" value="33"/>
</dbReference>
<dbReference type="ComplexPortal" id="CPX-2126">
    <property type="entry name" value="Glycine/Proline betaine ABC transporter complex"/>
</dbReference>
<dbReference type="FunCoup" id="P14176">
    <property type="interactions" value="243"/>
</dbReference>
<dbReference type="IntAct" id="P14176">
    <property type="interactions" value="1"/>
</dbReference>
<dbReference type="STRING" id="511145.b2678"/>
<dbReference type="TCDB" id="3.A.1.12.1">
    <property type="family name" value="the atp-binding cassette (abc) superfamily"/>
</dbReference>
<dbReference type="PaxDb" id="511145-b2678"/>
<dbReference type="EnsemblBacteria" id="AAC75725">
    <property type="protein sequence ID" value="AAC75725"/>
    <property type="gene ID" value="b2678"/>
</dbReference>
<dbReference type="GeneID" id="86860771"/>
<dbReference type="GeneID" id="947145"/>
<dbReference type="KEGG" id="ecj:JW2653"/>
<dbReference type="KEGG" id="eco:b2678"/>
<dbReference type="KEGG" id="ecoc:C3026_14755"/>
<dbReference type="PATRIC" id="fig|1411691.4.peg.4063"/>
<dbReference type="EchoBASE" id="EB0765"/>
<dbReference type="eggNOG" id="COG4176">
    <property type="taxonomic scope" value="Bacteria"/>
</dbReference>
<dbReference type="HOGENOM" id="CLU_028473_1_0_6"/>
<dbReference type="InParanoid" id="P14176"/>
<dbReference type="OMA" id="HFNIMDP"/>
<dbReference type="OrthoDB" id="9815258at2"/>
<dbReference type="PhylomeDB" id="P14176"/>
<dbReference type="BioCyc" id="EcoCyc:PROW-MONOMER"/>
<dbReference type="BioCyc" id="MetaCyc:PROW-MONOMER"/>
<dbReference type="PRO" id="PR:P14176"/>
<dbReference type="Proteomes" id="UP000000625">
    <property type="component" value="Chromosome"/>
</dbReference>
<dbReference type="GO" id="GO:0043190">
    <property type="term" value="C:ATP-binding cassette (ABC) transporter complex"/>
    <property type="evidence" value="ECO:0000255"/>
    <property type="project" value="EcoCyc"/>
</dbReference>
<dbReference type="GO" id="GO:0016020">
    <property type="term" value="C:membrane"/>
    <property type="evidence" value="ECO:0000314"/>
    <property type="project" value="ComplexPortal"/>
</dbReference>
<dbReference type="GO" id="GO:0005886">
    <property type="term" value="C:plasma membrane"/>
    <property type="evidence" value="ECO:0000314"/>
    <property type="project" value="EcoCyc"/>
</dbReference>
<dbReference type="GO" id="GO:1990222">
    <property type="term" value="C:ProVWX complex"/>
    <property type="evidence" value="ECO:0000353"/>
    <property type="project" value="ComplexPortal"/>
</dbReference>
<dbReference type="GO" id="GO:0005275">
    <property type="term" value="F:amine transmembrane transporter activity"/>
    <property type="evidence" value="ECO:0000314"/>
    <property type="project" value="EcoCyc"/>
</dbReference>
<dbReference type="GO" id="GO:0015226">
    <property type="term" value="F:carnitine transmembrane transporter activity"/>
    <property type="evidence" value="ECO:0000318"/>
    <property type="project" value="GO_Central"/>
</dbReference>
<dbReference type="GO" id="GO:0089718">
    <property type="term" value="P:amino acid import across plasma membrane"/>
    <property type="evidence" value="ECO:0000314"/>
    <property type="project" value="ComplexPortal"/>
</dbReference>
<dbReference type="GO" id="GO:1902603">
    <property type="term" value="P:carnitine transmembrane transport"/>
    <property type="evidence" value="ECO:0000318"/>
    <property type="project" value="GO_Central"/>
</dbReference>
<dbReference type="GO" id="GO:0071470">
    <property type="term" value="P:cellular response to osmotic stress"/>
    <property type="evidence" value="ECO:0000314"/>
    <property type="project" value="ComplexPortal"/>
</dbReference>
<dbReference type="GO" id="GO:0015871">
    <property type="term" value="P:choline transport"/>
    <property type="evidence" value="ECO:0000318"/>
    <property type="project" value="GO_Central"/>
</dbReference>
<dbReference type="GO" id="GO:0031460">
    <property type="term" value="P:glycine betaine transport"/>
    <property type="evidence" value="ECO:0000314"/>
    <property type="project" value="ComplexPortal"/>
</dbReference>
<dbReference type="GO" id="GO:1903804">
    <property type="term" value="P:glycine import across plasma membrane"/>
    <property type="evidence" value="ECO:0000314"/>
    <property type="project" value="ComplexPortal"/>
</dbReference>
<dbReference type="GO" id="GO:0006972">
    <property type="term" value="P:hyperosmotic response"/>
    <property type="evidence" value="ECO:0000314"/>
    <property type="project" value="EcoCyc"/>
</dbReference>
<dbReference type="CDD" id="cd06261">
    <property type="entry name" value="TM_PBP2"/>
    <property type="match status" value="1"/>
</dbReference>
<dbReference type="FunFam" id="1.10.3720.10:FF:000001">
    <property type="entry name" value="Glycine betaine ABC transporter, permease"/>
    <property type="match status" value="1"/>
</dbReference>
<dbReference type="Gene3D" id="1.10.3720.10">
    <property type="entry name" value="MetI-like"/>
    <property type="match status" value="1"/>
</dbReference>
<dbReference type="InterPro" id="IPR000515">
    <property type="entry name" value="MetI-like"/>
</dbReference>
<dbReference type="InterPro" id="IPR035906">
    <property type="entry name" value="MetI-like_sf"/>
</dbReference>
<dbReference type="NCBIfam" id="NF008196">
    <property type="entry name" value="PRK10952.1"/>
    <property type="match status" value="1"/>
</dbReference>
<dbReference type="PANTHER" id="PTHR47737">
    <property type="entry name" value="GLYCINE BETAINE/PROLINE BETAINE TRANSPORT SYSTEM PERMEASE PROTEIN PROW"/>
    <property type="match status" value="1"/>
</dbReference>
<dbReference type="PANTHER" id="PTHR47737:SF1">
    <property type="entry name" value="GLYCINE BETAINE_PROLINE BETAINE TRANSPORT SYSTEM PERMEASE PROTEIN PROW"/>
    <property type="match status" value="1"/>
</dbReference>
<dbReference type="Pfam" id="PF00528">
    <property type="entry name" value="BPD_transp_1"/>
    <property type="match status" value="1"/>
</dbReference>
<dbReference type="SUPFAM" id="SSF161098">
    <property type="entry name" value="MetI-like"/>
    <property type="match status" value="1"/>
</dbReference>
<dbReference type="PROSITE" id="PS50928">
    <property type="entry name" value="ABC_TM1"/>
    <property type="match status" value="1"/>
</dbReference>
<accession>P14176</accession>
<gene>
    <name evidence="8" type="primary">proW</name>
    <name type="ordered locus">b2678</name>
    <name type="ordered locus">JW2653</name>
</gene>
<keyword id="KW-0029">Amino-acid transport</keyword>
<keyword id="KW-0997">Cell inner membrane</keyword>
<keyword id="KW-1003">Cell membrane</keyword>
<keyword id="KW-0472">Membrane</keyword>
<keyword id="KW-1185">Reference proteome</keyword>
<keyword id="KW-0812">Transmembrane</keyword>
<keyword id="KW-1133">Transmembrane helix</keyword>
<keyword id="KW-0813">Transport</keyword>
<evidence type="ECO:0000255" key="1"/>
<evidence type="ECO:0000255" key="2">
    <source>
        <dbReference type="PROSITE-ProRule" id="PRU00441"/>
    </source>
</evidence>
<evidence type="ECO:0000256" key="3">
    <source>
        <dbReference type="SAM" id="MobiDB-lite"/>
    </source>
</evidence>
<evidence type="ECO:0000269" key="4">
    <source>
    </source>
</evidence>
<evidence type="ECO:0000269" key="5">
    <source>
    </source>
</evidence>
<evidence type="ECO:0000269" key="6">
    <source>
    </source>
</evidence>
<evidence type="ECO:0000269" key="7">
    <source>
    </source>
</evidence>
<evidence type="ECO:0000303" key="8">
    <source>
    </source>
</evidence>
<evidence type="ECO:0000305" key="9"/>
<evidence type="ECO:0000305" key="10">
    <source>
    </source>
</evidence>
<proteinExistence type="evidence at protein level"/>